<feature type="chain" id="PRO_0000445571" description="Actin-related protein 3-A">
    <location>
        <begin position="1"/>
        <end position="418"/>
    </location>
</feature>
<sequence>MAARLPACVVDCGTGYTKLGYAGNTEPQFIIPSCIAIKESAKVGDQAQRRLMKGVDDLDFHIGDEAIDKPTYATKWPIRHGIVEDWDLMERFMEQIIFKYLRAEPEDHYFLLTEPPLNTPENREYTAEIMFESFNVPGLYIAVQAVLALAASWTSRQVGERTLTGTVIDSGDGVTHVIPVAEGYVIGSCIKHIPIAGRDITYFIQQLLRDREVGIPPEQSLETAKAVKEKFSYVCPDLVKEFSKYDTDGAKWIKQYMGVNAVSKKEFSIDVGYERFLGPEIFFHPEFANPDFTQPISEVVDEVIQNCPIDVRRPLYKNIVLSGGSTMFRDFGRRLQRDVKRTVDARLKLSEELSGGRLKPKPIDVQVITHHMQRYAVWFGGSMLASTPEFYQVCHTKKDYEEIGPSICRHNPVFGVMS</sequence>
<comment type="function">
    <text evidence="1 2 5">ATP-binding component of the Arp2/3 complex, a multiprotein complex that mediates actin polymerization upon stimulation by nucleation-promoting factor (NPF) (PubMed:17178911). The Arp2/3 complex mediates the formation of branched actin networks in the cytoplasm, providing the force for cell motility (PubMed:17178911). Seems to contact the pointed end of the daughter actin filament (By similarity). In addition to its role in the cytoplasmic cytoskeleton, the Arp2/3 complex also promotes actin polymerization in the nucleus, thereby regulating gene transcription and repair of damaged DNA (Probable). The Arp2/3 complex promotes homologous recombination (HR) repair in response to DNA damage by promoting nuclear actin polymerization, leading to drive motility of double-strand breaks (DSBs) (By similarity).</text>
</comment>
<comment type="subunit">
    <text evidence="3">Component of the Arp2/3 complex composed of actr2/arp2, actr3/arp3, arpc1 (arpc1a or arpc1b), arpc2, arpc3, arpc4 and arpc5.</text>
</comment>
<comment type="subcellular location">
    <subcellularLocation>
        <location evidence="2">Cytoplasm</location>
        <location evidence="2">Cytoskeleton</location>
    </subcellularLocation>
    <subcellularLocation>
        <location evidence="2">Cell projection</location>
    </subcellularLocation>
    <subcellularLocation>
        <location evidence="3">Nucleus</location>
    </subcellularLocation>
</comment>
<comment type="similarity">
    <text evidence="4">Belongs to the actin family. ARP3 subfamily.</text>
</comment>
<protein>
    <recommendedName>
        <fullName evidence="4">Actin-related protein 3-A</fullName>
    </recommendedName>
</protein>
<organism evidence="6">
    <name type="scientific">Xenopus laevis</name>
    <name type="common">African clawed frog</name>
    <dbReference type="NCBI Taxonomy" id="8355"/>
    <lineage>
        <taxon>Eukaryota</taxon>
        <taxon>Metazoa</taxon>
        <taxon>Chordata</taxon>
        <taxon>Craniata</taxon>
        <taxon>Vertebrata</taxon>
        <taxon>Euteleostomi</taxon>
        <taxon>Amphibia</taxon>
        <taxon>Batrachia</taxon>
        <taxon>Anura</taxon>
        <taxon>Pipoidea</taxon>
        <taxon>Pipidae</taxon>
        <taxon>Xenopodinae</taxon>
        <taxon>Xenopus</taxon>
        <taxon>Xenopus</taxon>
    </lineage>
</organism>
<gene>
    <name evidence="8" type="primary">actr3-a</name>
    <name evidence="7" type="ORF">XELAEV_18046895mg</name>
</gene>
<evidence type="ECO:0000250" key="1">
    <source>
        <dbReference type="UniProtKB" id="P61158"/>
    </source>
</evidence>
<evidence type="ECO:0000269" key="2">
    <source>
    </source>
</evidence>
<evidence type="ECO:0000269" key="3">
    <source>
    </source>
</evidence>
<evidence type="ECO:0000305" key="4"/>
<evidence type="ECO:0000305" key="5">
    <source>
    </source>
</evidence>
<evidence type="ECO:0000312" key="6">
    <source>
        <dbReference type="EMBL" id="AAH47983.1"/>
    </source>
</evidence>
<evidence type="ECO:0000312" key="7">
    <source>
        <dbReference type="EMBL" id="OCT60872.1"/>
    </source>
</evidence>
<evidence type="ECO:0000312" key="8">
    <source>
        <dbReference type="Xenbase" id="XB-GENE-5915333"/>
    </source>
</evidence>
<name>ARP3A_XENLA</name>
<keyword id="KW-0009">Actin-binding</keyword>
<keyword id="KW-0067">ATP-binding</keyword>
<keyword id="KW-0966">Cell projection</keyword>
<keyword id="KW-0963">Cytoplasm</keyword>
<keyword id="KW-0206">Cytoskeleton</keyword>
<keyword id="KW-0547">Nucleotide-binding</keyword>
<keyword id="KW-0539">Nucleus</keyword>
<keyword id="KW-1185">Reference proteome</keyword>
<reference key="1">
    <citation type="journal article" date="2006" name="J. Cell Biol.">
        <title>Actin turnover-dependent fast dissociation of capping protein in the dendritic nucleation actin network: evidence of frequent filament severing.</title>
        <authorList>
            <person name="Miyoshi T."/>
            <person name="Tsuji T."/>
            <person name="Higashida C."/>
            <person name="Hertzog M."/>
            <person name="Fujita A."/>
            <person name="Narumiya S."/>
            <person name="Scita G."/>
            <person name="Watanabe N."/>
        </authorList>
    </citation>
    <scope>NUCLEOTIDE SEQUENCE [MRNA]</scope>
    <scope>FUNCTION</scope>
    <scope>SUBCELLULAR LOCATION</scope>
</reference>
<reference key="2">
    <citation type="journal article" date="2016" name="Nature">
        <title>Genome evolution in the allotetraploid frog Xenopus laevis.</title>
        <authorList>
            <person name="Session A.M."/>
            <person name="Uno Y."/>
            <person name="Kwon T."/>
            <person name="Chapman J.A."/>
            <person name="Toyoda A."/>
            <person name="Takahashi S."/>
            <person name="Fukui A."/>
            <person name="Hikosaka A."/>
            <person name="Suzuki A."/>
            <person name="Kondo M."/>
            <person name="van Heeringen S.J."/>
            <person name="Quigley I."/>
            <person name="Heinz S."/>
            <person name="Ogino H."/>
            <person name="Ochi H."/>
            <person name="Hellsten U."/>
            <person name="Lyons J.B."/>
            <person name="Simakov O."/>
            <person name="Putnam N."/>
            <person name="Stites J."/>
            <person name="Kuroki Y."/>
            <person name="Tanaka T."/>
            <person name="Michiue T."/>
            <person name="Watanabe M."/>
            <person name="Bogdanovic O."/>
            <person name="Lister R."/>
            <person name="Georgiou G."/>
            <person name="Paranjpe S.S."/>
            <person name="van Kruijsbergen I."/>
            <person name="Shu S."/>
            <person name="Carlson J."/>
            <person name="Kinoshita T."/>
            <person name="Ohta Y."/>
            <person name="Mawaribuchi S."/>
            <person name="Jenkins J."/>
            <person name="Grimwood J."/>
            <person name="Schmutz J."/>
            <person name="Mitros T."/>
            <person name="Mozaffari S.V."/>
            <person name="Suzuki Y."/>
            <person name="Haramoto Y."/>
            <person name="Yamamoto T.S."/>
            <person name="Takagi C."/>
            <person name="Heald R."/>
            <person name="Miller K."/>
            <person name="Haudenschild C."/>
            <person name="Kitzman J."/>
            <person name="Nakayama T."/>
            <person name="Izutsu Y."/>
            <person name="Robert J."/>
            <person name="Fortriede J."/>
            <person name="Burns K."/>
            <person name="Lotay V."/>
            <person name="Karimi K."/>
            <person name="Yasuoka Y."/>
            <person name="Dichmann D.S."/>
            <person name="Flajnik M.F."/>
            <person name="Houston D.W."/>
            <person name="Shendure J."/>
            <person name="DuPasquier L."/>
            <person name="Vize P.D."/>
            <person name="Zorn A.M."/>
            <person name="Ito M."/>
            <person name="Marcotte E.M."/>
            <person name="Wallingford J.B."/>
            <person name="Ito Y."/>
            <person name="Asashima M."/>
            <person name="Ueno N."/>
            <person name="Matsuda Y."/>
            <person name="Veenstra G.J."/>
            <person name="Fujiyama A."/>
            <person name="Harland R.M."/>
            <person name="Taira M."/>
            <person name="Rokhsar D.S."/>
        </authorList>
    </citation>
    <scope>NUCLEOTIDE SEQUENCE [LARGE SCALE GENOMIC DNA]</scope>
    <source>
        <strain>J</strain>
    </source>
</reference>
<reference key="3">
    <citation type="submission" date="2003-03" db="EMBL/GenBank/DDBJ databases">
        <authorList>
            <consortium name="NIH - Xenopus Gene Collection (XGC) project"/>
        </authorList>
    </citation>
    <scope>NUCLEOTIDE SEQUENCE [LARGE SCALE MRNA]</scope>
    <source>
        <tissue>Embryo</tissue>
    </source>
</reference>
<reference key="4">
    <citation type="journal article" date="2018" name="Nature">
        <title>Nuclear ARP2/3 drives DNA break clustering for homology-directed repair.</title>
        <authorList>
            <person name="Schrank B.R."/>
            <person name="Aparicio T."/>
            <person name="Li Y."/>
            <person name="Chang W."/>
            <person name="Chait B.T."/>
            <person name="Gundersen G.G."/>
            <person name="Gottesman M.E."/>
            <person name="Gautier J."/>
        </authorList>
    </citation>
    <scope>FUNCTION</scope>
    <scope>SUBCELLULAR LOCATION</scope>
    <scope>IDENTIFICATION IN THE ARP2/3 COMPLEX</scope>
    <scope>IDENTIFICATION BY MASS SPECTROMETRY</scope>
</reference>
<dbReference type="EMBL" id="EF011871">
    <property type="protein sequence ID" value="ABL63904.1"/>
    <property type="molecule type" value="mRNA"/>
</dbReference>
<dbReference type="EMBL" id="CM004483">
    <property type="protein sequence ID" value="OCT60872.1"/>
    <property type="molecule type" value="Genomic_DNA"/>
</dbReference>
<dbReference type="EMBL" id="BC047983">
    <property type="protein sequence ID" value="AAH47983.1"/>
    <property type="molecule type" value="mRNA"/>
</dbReference>
<dbReference type="RefSeq" id="NP_001080392.1">
    <property type="nucleotide sequence ID" value="NM_001086923.1"/>
</dbReference>
<dbReference type="SMR" id="Q801P7"/>
<dbReference type="IntAct" id="Q801P7">
    <property type="interactions" value="1"/>
</dbReference>
<dbReference type="MINT" id="Q801P7"/>
<dbReference type="STRING" id="8355.Q801P7"/>
<dbReference type="PaxDb" id="8355-Q801P7"/>
<dbReference type="DNASU" id="380084"/>
<dbReference type="GeneID" id="380084"/>
<dbReference type="KEGG" id="xla:380084"/>
<dbReference type="AGR" id="Xenbase:XB-GENE-5915333"/>
<dbReference type="CTD" id="380084"/>
<dbReference type="Xenbase" id="XB-GENE-5915333">
    <property type="gene designation" value="actr3.S"/>
</dbReference>
<dbReference type="OMA" id="VKQWKGV"/>
<dbReference type="OrthoDB" id="421448at2759"/>
<dbReference type="Proteomes" id="UP000186698">
    <property type="component" value="Chromosome 9_10S"/>
</dbReference>
<dbReference type="Proteomes" id="UP000694892">
    <property type="component" value="Chromosome 9_10S"/>
</dbReference>
<dbReference type="Bgee" id="380084">
    <property type="expression patterns" value="Expressed in spleen and 20 other cell types or tissues"/>
</dbReference>
<dbReference type="GO" id="GO:0005885">
    <property type="term" value="C:Arp2/3 protein complex"/>
    <property type="evidence" value="ECO:0000314"/>
    <property type="project" value="UniProtKB"/>
</dbReference>
<dbReference type="GO" id="GO:0042995">
    <property type="term" value="C:cell projection"/>
    <property type="evidence" value="ECO:0007669"/>
    <property type="project" value="UniProtKB-SubCell"/>
</dbReference>
<dbReference type="GO" id="GO:0005737">
    <property type="term" value="C:cytoplasm"/>
    <property type="evidence" value="ECO:0007669"/>
    <property type="project" value="UniProtKB-KW"/>
</dbReference>
<dbReference type="GO" id="GO:0005634">
    <property type="term" value="C:nucleus"/>
    <property type="evidence" value="ECO:0000314"/>
    <property type="project" value="UniProtKB"/>
</dbReference>
<dbReference type="GO" id="GO:0035861">
    <property type="term" value="C:site of double-strand break"/>
    <property type="evidence" value="ECO:0000314"/>
    <property type="project" value="UniProtKB"/>
</dbReference>
<dbReference type="GO" id="GO:0003779">
    <property type="term" value="F:actin binding"/>
    <property type="evidence" value="ECO:0007669"/>
    <property type="project" value="UniProtKB-KW"/>
</dbReference>
<dbReference type="GO" id="GO:0005524">
    <property type="term" value="F:ATP binding"/>
    <property type="evidence" value="ECO:0007669"/>
    <property type="project" value="UniProtKB-KW"/>
</dbReference>
<dbReference type="GO" id="GO:0034314">
    <property type="term" value="P:Arp2/3 complex-mediated actin nucleation"/>
    <property type="evidence" value="ECO:0000318"/>
    <property type="project" value="GO_Central"/>
</dbReference>
<dbReference type="CDD" id="cd10221">
    <property type="entry name" value="ASKHA_NBD_Arp3-like"/>
    <property type="match status" value="1"/>
</dbReference>
<dbReference type="FunFam" id="3.30.420.40:FF:000029">
    <property type="entry name" value="Actin-related protein 3"/>
    <property type="match status" value="1"/>
</dbReference>
<dbReference type="FunFam" id="3.30.420.40:FF:000315">
    <property type="entry name" value="Actin-related protein 3"/>
    <property type="match status" value="1"/>
</dbReference>
<dbReference type="FunFam" id="3.30.420.40:FF:000803">
    <property type="entry name" value="Actin-related protein 3"/>
    <property type="match status" value="1"/>
</dbReference>
<dbReference type="FunFam" id="3.90.640.10:FF:000006">
    <property type="entry name" value="Actin-related protein 3 (ARP3)"/>
    <property type="match status" value="1"/>
</dbReference>
<dbReference type="FunFam" id="2.30.36.70:FF:000002">
    <property type="entry name" value="actin-related protein 3 isoform X1"/>
    <property type="match status" value="1"/>
</dbReference>
<dbReference type="Gene3D" id="3.30.420.40">
    <property type="match status" value="2"/>
</dbReference>
<dbReference type="Gene3D" id="2.30.36.70">
    <property type="entry name" value="Actin, Chain A, domain 2"/>
    <property type="match status" value="1"/>
</dbReference>
<dbReference type="Gene3D" id="3.90.640.10">
    <property type="entry name" value="Actin, Chain A, domain 4"/>
    <property type="match status" value="1"/>
</dbReference>
<dbReference type="InterPro" id="IPR004000">
    <property type="entry name" value="Actin"/>
</dbReference>
<dbReference type="InterPro" id="IPR020902">
    <property type="entry name" value="Actin/actin-like_CS"/>
</dbReference>
<dbReference type="InterPro" id="IPR043129">
    <property type="entry name" value="ATPase_NBD"/>
</dbReference>
<dbReference type="PANTHER" id="PTHR11937">
    <property type="entry name" value="ACTIN"/>
    <property type="match status" value="1"/>
</dbReference>
<dbReference type="Pfam" id="PF00022">
    <property type="entry name" value="Actin"/>
    <property type="match status" value="2"/>
</dbReference>
<dbReference type="SMART" id="SM00268">
    <property type="entry name" value="ACTIN"/>
    <property type="match status" value="1"/>
</dbReference>
<dbReference type="SUPFAM" id="SSF53067">
    <property type="entry name" value="Actin-like ATPase domain"/>
    <property type="match status" value="2"/>
</dbReference>
<dbReference type="PROSITE" id="PS01132">
    <property type="entry name" value="ACTINS_ACT_LIKE"/>
    <property type="match status" value="1"/>
</dbReference>
<accession>Q801P7</accession>
<proteinExistence type="evidence at protein level"/>